<sequence length="124" mass="13553">MADDLKRFLYKKLPSVEGLHAIVVSDRDGVPVIKVANDSAPEHALRPGFLSTFALATDQGSKLGLSKNKSIICYYNTYQVVQFNRLPLVVSFIASSSANTGLIVSLEKELAPLFEELIKVVEVS</sequence>
<evidence type="ECO:0000250" key="1">
    <source>
        <dbReference type="UniProtKB" id="Q9UHA4"/>
    </source>
</evidence>
<evidence type="ECO:0000269" key="2">
    <source>
    </source>
</evidence>
<evidence type="ECO:0000269" key="3">
    <source>
    </source>
</evidence>
<evidence type="ECO:0000269" key="4">
    <source>
    </source>
</evidence>
<evidence type="ECO:0000269" key="5">
    <source>
    </source>
</evidence>
<evidence type="ECO:0000269" key="6">
    <source>
    </source>
</evidence>
<evidence type="ECO:0000305" key="7"/>
<evidence type="ECO:0007829" key="8">
    <source>
        <dbReference type="PDB" id="1VET"/>
    </source>
</evidence>
<organism>
    <name type="scientific">Mus musculus</name>
    <name type="common">Mouse</name>
    <dbReference type="NCBI Taxonomy" id="10090"/>
    <lineage>
        <taxon>Eukaryota</taxon>
        <taxon>Metazoa</taxon>
        <taxon>Chordata</taxon>
        <taxon>Craniata</taxon>
        <taxon>Vertebrata</taxon>
        <taxon>Euteleostomi</taxon>
        <taxon>Mammalia</taxon>
        <taxon>Eutheria</taxon>
        <taxon>Euarchontoglires</taxon>
        <taxon>Glires</taxon>
        <taxon>Rodentia</taxon>
        <taxon>Myomorpha</taxon>
        <taxon>Muroidea</taxon>
        <taxon>Muridae</taxon>
        <taxon>Murinae</taxon>
        <taxon>Mus</taxon>
        <taxon>Mus</taxon>
    </lineage>
</organism>
<keyword id="KW-0002">3D-structure</keyword>
<keyword id="KW-0903">Direct protein sequencing</keyword>
<keyword id="KW-0967">Endosome</keyword>
<keyword id="KW-0472">Membrane</keyword>
<keyword id="KW-1185">Reference proteome</keyword>
<proteinExistence type="evidence at protein level"/>
<reference key="1">
    <citation type="journal article" date="1998" name="Science">
        <title>MP1: a MEK binding partner that enhances enzymatic activation of the MAP kinase cascade.</title>
        <authorList>
            <person name="Schaeffer H.J."/>
            <person name="Catling A.D."/>
            <person name="Eblen S.T."/>
            <person name="Collier L.S."/>
            <person name="Krauss A."/>
            <person name="Weber M.J."/>
        </authorList>
    </citation>
    <scope>NUCLEOTIDE SEQUENCE [MRNA]</scope>
    <scope>FUNCTION</scope>
    <scope>INTERACTION WITH MAP2K1/MEK1</scope>
</reference>
<reference key="2">
    <citation type="journal article" date="2004" name="Genome Res.">
        <title>The status, quality, and expansion of the NIH full-length cDNA project: the Mammalian Gene Collection (MGC).</title>
        <authorList>
            <consortium name="The MGC Project Team"/>
        </authorList>
    </citation>
    <scope>NUCLEOTIDE SEQUENCE [LARGE SCALE MRNA]</scope>
    <source>
        <strain>129</strain>
        <tissue>Mammary gland</tissue>
    </source>
</reference>
<reference key="3">
    <citation type="journal article" date="2009" name="EMBO J.">
        <title>The novel lipid raft adaptor p18 controls endosome dynamics by anchoring the MEK-ERK pathway to late endosomes.</title>
        <authorList>
            <person name="Nada S."/>
            <person name="Hondo A."/>
            <person name="Kasai A."/>
            <person name="Koike M."/>
            <person name="Saito K."/>
            <person name="Uchiyama Y."/>
            <person name="Okada M."/>
        </authorList>
    </citation>
    <scope>PROTEIN SEQUENCE OF 109-119</scope>
    <scope>INTERACTION WITH LAMTOR1</scope>
    <scope>SUBCELLULAR LOCATION</scope>
</reference>
<reference key="4">
    <citation type="journal article" date="2001" name="J. Cell Biol.">
        <title>A novel 14-kilodalton protein interacts with the mitogen-activated protein kinase scaffold mp1 on a late endosomal/lysosomal compartment.</title>
        <authorList>
            <person name="Wunderlich W."/>
            <person name="Fialka I."/>
            <person name="Teis D."/>
            <person name="Alpi A."/>
            <person name="Pfeifer A."/>
            <person name="Parton R.G."/>
            <person name="Lottspeich F."/>
            <person name="Huber L.A."/>
        </authorList>
    </citation>
    <scope>INTERACTION WITH LAMTOR2</scope>
</reference>
<reference key="5">
    <citation type="journal article" date="2004" name="Proc. Natl. Acad. Sci. U.S.A.">
        <title>Modular construction of a signaling scaffold: MORG1 interacts with components of the ERK cascade and links ERK signaling to specific agonists.</title>
        <authorList>
            <person name="Vomastek T."/>
            <person name="Schaeffer H.-J."/>
            <person name="Tarcsafalvi A."/>
            <person name="Smolkin M.E."/>
            <person name="Bissonette E.A."/>
            <person name="Weber M.J."/>
        </authorList>
    </citation>
    <scope>INTERACTION WITH MORG1</scope>
</reference>
<reference key="6">
    <citation type="journal article" date="2010" name="Cell">
        <title>A tissue-specific atlas of mouse protein phosphorylation and expression.</title>
        <authorList>
            <person name="Huttlin E.L."/>
            <person name="Jedrychowski M.P."/>
            <person name="Elias J.E."/>
            <person name="Goswami T."/>
            <person name="Rad R."/>
            <person name="Beausoleil S.A."/>
            <person name="Villen J."/>
            <person name="Haas W."/>
            <person name="Sowa M.E."/>
            <person name="Gygi S.P."/>
        </authorList>
    </citation>
    <scope>IDENTIFICATION BY MASS SPECTROMETRY [LARGE SCALE ANALYSIS]</scope>
    <source>
        <tissue>Brain</tissue>
        <tissue>Brown adipose tissue</tissue>
        <tissue>Heart</tissue>
        <tissue>Kidney</tissue>
        <tissue>Liver</tissue>
        <tissue>Lung</tissue>
        <tissue>Pancreas</tissue>
        <tissue>Spleen</tissue>
        <tissue>Testis</tissue>
    </source>
</reference>
<reference key="7">
    <citation type="journal article" date="2004" name="Proc. Natl. Acad. Sci. U.S.A.">
        <title>Crystal structure of the p14/MP1 scaffolding complex: how a twin couple attaches mitogen-activated protein kinase signaling to late endosomes.</title>
        <authorList>
            <person name="Kurzbauer R."/>
            <person name="Teis D."/>
            <person name="de Araujo M.E.G."/>
            <person name="Maurer-Stroh S."/>
            <person name="Eisenhaber F."/>
            <person name="Bourenkov G.P."/>
            <person name="Bartunik H.D."/>
            <person name="Hekman M."/>
            <person name="Rapp U.R."/>
            <person name="Huber L.A."/>
            <person name="Clausen T."/>
        </authorList>
    </citation>
    <scope>X-RAY CRYSTALLOGRAPHY (1.9 ANGSTROMS) IN COMPLEX WITH LAMTOR2</scope>
    <scope>FUNCTION</scope>
    <scope>SUBCELLULAR LOCATION</scope>
</reference>
<name>LTOR3_MOUSE</name>
<dbReference type="EMBL" id="AF082526">
    <property type="protein sequence ID" value="AAC34591.1"/>
    <property type="molecule type" value="mRNA"/>
</dbReference>
<dbReference type="EMBL" id="BC016417">
    <property type="protein sequence ID" value="AAH16417.1"/>
    <property type="molecule type" value="mRNA"/>
</dbReference>
<dbReference type="EMBL" id="BC083155">
    <property type="protein sequence ID" value="AAH83155.1"/>
    <property type="molecule type" value="mRNA"/>
</dbReference>
<dbReference type="CCDS" id="CCDS51078.1"/>
<dbReference type="RefSeq" id="NP_064304.1">
    <property type="nucleotide sequence ID" value="NM_019920.2"/>
</dbReference>
<dbReference type="PDB" id="1VET">
    <property type="method" value="X-ray"/>
    <property type="resolution" value="1.90 A"/>
    <property type="chains" value="A=1-124"/>
</dbReference>
<dbReference type="PDB" id="1VEU">
    <property type="method" value="X-ray"/>
    <property type="resolution" value="2.15 A"/>
    <property type="chains" value="A=1-124"/>
</dbReference>
<dbReference type="PDBsum" id="1VET"/>
<dbReference type="PDBsum" id="1VEU"/>
<dbReference type="SMR" id="O88653"/>
<dbReference type="BioGRID" id="208123">
    <property type="interactions" value="13"/>
</dbReference>
<dbReference type="ComplexPortal" id="CPX-4761">
    <property type="entry name" value="Ragulator complex"/>
</dbReference>
<dbReference type="CORUM" id="O88653"/>
<dbReference type="FunCoup" id="O88653">
    <property type="interactions" value="2177"/>
</dbReference>
<dbReference type="IntAct" id="O88653">
    <property type="interactions" value="7"/>
</dbReference>
<dbReference type="MINT" id="O88653"/>
<dbReference type="STRING" id="10090.ENSMUSP00000130811"/>
<dbReference type="iPTMnet" id="O88653"/>
<dbReference type="PhosphoSitePlus" id="O88653"/>
<dbReference type="SwissPalm" id="O88653"/>
<dbReference type="jPOST" id="O88653"/>
<dbReference type="PaxDb" id="10090-ENSMUSP00000130811"/>
<dbReference type="PeptideAtlas" id="O88653"/>
<dbReference type="ProteomicsDB" id="292050"/>
<dbReference type="Pumba" id="O88653"/>
<dbReference type="TopDownProteomics" id="O88653"/>
<dbReference type="Antibodypedia" id="3792">
    <property type="antibodies" value="233 antibodies from 33 providers"/>
</dbReference>
<dbReference type="DNASU" id="56692"/>
<dbReference type="Ensembl" id="ENSMUST00000168345.6">
    <property type="protein sequence ID" value="ENSMUSP00000130811.2"/>
    <property type="gene ID" value="ENSMUSG00000091512.6"/>
</dbReference>
<dbReference type="Ensembl" id="ENSMUST00000197064.5">
    <property type="protein sequence ID" value="ENSMUSP00000142512.2"/>
    <property type="gene ID" value="ENSMUSG00000091512.6"/>
</dbReference>
<dbReference type="GeneID" id="56692"/>
<dbReference type="KEGG" id="mmu:56692"/>
<dbReference type="UCSC" id="uc008rms.1">
    <property type="organism name" value="mouse"/>
</dbReference>
<dbReference type="AGR" id="MGI:1929467"/>
<dbReference type="CTD" id="8649"/>
<dbReference type="MGI" id="MGI:1929467">
    <property type="gene designation" value="Lamtor3"/>
</dbReference>
<dbReference type="VEuPathDB" id="HostDB:ENSMUSG00000091512"/>
<dbReference type="eggNOG" id="ENOG502RYGZ">
    <property type="taxonomic scope" value="Eukaryota"/>
</dbReference>
<dbReference type="GeneTree" id="ENSGT00390000013159"/>
<dbReference type="HOGENOM" id="CLU_134641_0_0_1"/>
<dbReference type="InParanoid" id="O88653"/>
<dbReference type="OMA" id="YQVIQMN"/>
<dbReference type="OrthoDB" id="343907at2759"/>
<dbReference type="PhylomeDB" id="O88653"/>
<dbReference type="TreeFam" id="TF324889"/>
<dbReference type="Reactome" id="R-MMU-1632852">
    <property type="pathway name" value="Macroautophagy"/>
</dbReference>
<dbReference type="Reactome" id="R-MMU-165159">
    <property type="pathway name" value="MTOR signalling"/>
</dbReference>
<dbReference type="Reactome" id="R-MMU-166208">
    <property type="pathway name" value="mTORC1-mediated signalling"/>
</dbReference>
<dbReference type="Reactome" id="R-MMU-380972">
    <property type="pathway name" value="Energy dependent regulation of mTOR by LKB1-AMPK"/>
</dbReference>
<dbReference type="Reactome" id="R-MMU-5628897">
    <property type="pathway name" value="TP53 Regulates Metabolic Genes"/>
</dbReference>
<dbReference type="Reactome" id="R-MMU-5674135">
    <property type="pathway name" value="MAP2K and MAPK activation"/>
</dbReference>
<dbReference type="Reactome" id="R-MMU-6798695">
    <property type="pathway name" value="Neutrophil degranulation"/>
</dbReference>
<dbReference type="Reactome" id="R-MMU-8943724">
    <property type="pathway name" value="Regulation of PTEN gene transcription"/>
</dbReference>
<dbReference type="Reactome" id="R-MMU-9639288">
    <property type="pathway name" value="Amino acids regulate mTORC1"/>
</dbReference>
<dbReference type="BioGRID-ORCS" id="56692">
    <property type="hits" value="16 hits in 79 CRISPR screens"/>
</dbReference>
<dbReference type="ChiTaRS" id="Lamtor3">
    <property type="organism name" value="mouse"/>
</dbReference>
<dbReference type="EvolutionaryTrace" id="O88653"/>
<dbReference type="PRO" id="PR:O88653"/>
<dbReference type="Proteomes" id="UP000000589">
    <property type="component" value="Chromosome 3"/>
</dbReference>
<dbReference type="RNAct" id="O88653">
    <property type="molecule type" value="protein"/>
</dbReference>
<dbReference type="Bgee" id="ENSMUSG00000091512">
    <property type="expression patterns" value="Expressed in bone fossa and 252 other cell types or tissues"/>
</dbReference>
<dbReference type="ExpressionAtlas" id="O88653">
    <property type="expression patterns" value="baseline and differential"/>
</dbReference>
<dbReference type="GO" id="GO:1990877">
    <property type="term" value="C:FNIP-folliculin RagC/D GAP"/>
    <property type="evidence" value="ECO:0007669"/>
    <property type="project" value="Ensembl"/>
</dbReference>
<dbReference type="GO" id="GO:0005770">
    <property type="term" value="C:late endosome"/>
    <property type="evidence" value="ECO:0000314"/>
    <property type="project" value="UniProtKB"/>
</dbReference>
<dbReference type="GO" id="GO:0031902">
    <property type="term" value="C:late endosome membrane"/>
    <property type="evidence" value="ECO:0000303"/>
    <property type="project" value="ComplexPortal"/>
</dbReference>
<dbReference type="GO" id="GO:0005765">
    <property type="term" value="C:lysosomal membrane"/>
    <property type="evidence" value="ECO:0000250"/>
    <property type="project" value="UniProtKB"/>
</dbReference>
<dbReference type="GO" id="GO:0071986">
    <property type="term" value="C:Ragulator complex"/>
    <property type="evidence" value="ECO:0000250"/>
    <property type="project" value="UniProtKB"/>
</dbReference>
<dbReference type="GO" id="GO:0005085">
    <property type="term" value="F:guanyl-nucleotide exchange factor activity"/>
    <property type="evidence" value="ECO:0007669"/>
    <property type="project" value="Ensembl"/>
</dbReference>
<dbReference type="GO" id="GO:0019209">
    <property type="term" value="F:kinase activator activity"/>
    <property type="evidence" value="ECO:0000314"/>
    <property type="project" value="MGI"/>
</dbReference>
<dbReference type="GO" id="GO:0060090">
    <property type="term" value="F:molecular adaptor activity"/>
    <property type="evidence" value="ECO:0007669"/>
    <property type="project" value="Ensembl"/>
</dbReference>
<dbReference type="GO" id="GO:0071230">
    <property type="term" value="P:cellular response to amino acid stimulus"/>
    <property type="evidence" value="ECO:0000250"/>
    <property type="project" value="UniProtKB"/>
</dbReference>
<dbReference type="GO" id="GO:0043410">
    <property type="term" value="P:positive regulation of MAPK cascade"/>
    <property type="evidence" value="ECO:0000314"/>
    <property type="project" value="MGI"/>
</dbReference>
<dbReference type="GO" id="GO:0032008">
    <property type="term" value="P:positive regulation of TOR signaling"/>
    <property type="evidence" value="ECO:0000250"/>
    <property type="project" value="UniProtKB"/>
</dbReference>
<dbReference type="GO" id="GO:1904263">
    <property type="term" value="P:positive regulation of TORC1 signaling"/>
    <property type="evidence" value="ECO:0000250"/>
    <property type="project" value="UniProtKB"/>
</dbReference>
<dbReference type="GO" id="GO:0008104">
    <property type="term" value="P:protein localization"/>
    <property type="evidence" value="ECO:0000250"/>
    <property type="project" value="UniProtKB"/>
</dbReference>
<dbReference type="GO" id="GO:1902414">
    <property type="term" value="P:protein localization to cell junction"/>
    <property type="evidence" value="ECO:0000315"/>
    <property type="project" value="MGI"/>
</dbReference>
<dbReference type="GO" id="GO:0038202">
    <property type="term" value="P:TORC1 signaling"/>
    <property type="evidence" value="ECO:0000303"/>
    <property type="project" value="ComplexPortal"/>
</dbReference>
<dbReference type="FunFam" id="3.30.450.30:FF:000003">
    <property type="entry name" value="ragulator complex protein LAMTOR3 homolog"/>
    <property type="match status" value="1"/>
</dbReference>
<dbReference type="Gene3D" id="3.30.450.30">
    <property type="entry name" value="Dynein light chain 2a, cytoplasmic"/>
    <property type="match status" value="1"/>
</dbReference>
<dbReference type="InterPro" id="IPR015019">
    <property type="entry name" value="LAMTOR3"/>
</dbReference>
<dbReference type="PANTHER" id="PTHR13378:SF1">
    <property type="entry name" value="RAGULATOR COMPLEX PROTEIN LAMTOR3"/>
    <property type="match status" value="1"/>
</dbReference>
<dbReference type="PANTHER" id="PTHR13378">
    <property type="entry name" value="REGULATOR COMPLEX PROTEIN LAMTOR3"/>
    <property type="match status" value="1"/>
</dbReference>
<dbReference type="Pfam" id="PF08923">
    <property type="entry name" value="MAPKK1_Int"/>
    <property type="match status" value="1"/>
</dbReference>
<dbReference type="SMART" id="SM01278">
    <property type="entry name" value="MAPKK1_Int"/>
    <property type="match status" value="1"/>
</dbReference>
<dbReference type="SUPFAM" id="SSF103196">
    <property type="entry name" value="Roadblock/LC7 domain"/>
    <property type="match status" value="1"/>
</dbReference>
<accession>O88653</accession>
<protein>
    <recommendedName>
        <fullName>Ragulator complex protein LAMTOR3</fullName>
    </recommendedName>
    <alternativeName>
        <fullName>Late endosomal/lysosomal adaptor and MAPK and MTOR activator 3</fullName>
    </alternativeName>
    <alternativeName>
        <fullName>MEK-binding partner 1</fullName>
        <shortName>Mp1</shortName>
    </alternativeName>
    <alternativeName>
        <fullName>Mitogen-activated protein kinase kinase 1-interacting protein 1</fullName>
    </alternativeName>
    <alternativeName>
        <fullName>Mitogen-activated protein kinase scaffold protein 1</fullName>
    </alternativeName>
</protein>
<gene>
    <name type="primary">Lamtor3</name>
    <name type="synonym">Map2k1ip1</name>
    <name type="synonym">Mapbp</name>
    <name type="synonym">Mapksp1</name>
</gene>
<feature type="chain" id="PRO_0000221006" description="Ragulator complex protein LAMTOR3">
    <location>
        <begin position="1"/>
        <end position="124"/>
    </location>
</feature>
<feature type="region of interest" description="Required for interaction with LAMTOR2" evidence="2">
    <location>
        <begin position="57"/>
        <end position="70"/>
    </location>
</feature>
<feature type="helix" evidence="8">
    <location>
        <begin position="5"/>
        <end position="12"/>
    </location>
</feature>
<feature type="helix" evidence="8">
    <location>
        <begin position="13"/>
        <end position="15"/>
    </location>
</feature>
<feature type="strand" evidence="8">
    <location>
        <begin position="19"/>
        <end position="26"/>
    </location>
</feature>
<feature type="strand" evidence="8">
    <location>
        <begin position="31"/>
        <end position="36"/>
    </location>
</feature>
<feature type="helix" evidence="8">
    <location>
        <begin position="42"/>
        <end position="45"/>
    </location>
</feature>
<feature type="helix" evidence="8">
    <location>
        <begin position="47"/>
        <end position="50"/>
    </location>
</feature>
<feature type="helix" evidence="8">
    <location>
        <begin position="52"/>
        <end position="60"/>
    </location>
</feature>
<feature type="strand" evidence="8">
    <location>
        <begin position="63"/>
        <end position="65"/>
    </location>
</feature>
<feature type="strand" evidence="8">
    <location>
        <begin position="68"/>
        <end position="74"/>
    </location>
</feature>
<feature type="strand" evidence="8">
    <location>
        <begin position="76"/>
        <end position="85"/>
    </location>
</feature>
<feature type="strand" evidence="8">
    <location>
        <begin position="88"/>
        <end position="95"/>
    </location>
</feature>
<feature type="helix" evidence="8">
    <location>
        <begin position="100"/>
        <end position="117"/>
    </location>
</feature>
<feature type="turn" evidence="8">
    <location>
        <begin position="118"/>
        <end position="121"/>
    </location>
</feature>
<comment type="function">
    <text evidence="1 4 6">As part of the Ragulator complex it is involved in amino acid sensing and activation of mTORC1, a signaling complex promoting cell growth in response to growth factors, energy levels, and amino acids (PubMed:15263099). Activated by amino acids through a mechanism involving the lysosomal V-ATPase, the Ragulator plays a dual role for the small GTPases Rag (RagA/RRAGA, RagB/RRAGB, RagC/RRAGC and/or RagD/RRAGD): it (1) acts as a guanine nucleotide exchange factor (GEF), activating the small GTPases Rag and (2) mediates recruitment of Rag GTPases to the lysosome membrane (By similarity). Activated Ragulator and Rag GTPases function as a scaffold recruiting mTORC1 to lysosomes where it is in turn activated (By similarity). Adapter protein that enhances the efficiency of the MAP kinase cascade facilitating the activation of MAPK2 (PubMed:9733512).</text>
</comment>
<comment type="subunit">
    <text evidence="1 2 3 4 5 6">Part of the Ragulator complex composed of LAMTOR1, LAMTOR2, LAMTOR3, LAMTOR4 and LAMTOR5. LAMTOR4 and LAMTOR5 form a heterodimer that interacts, through LAMTOR1, with a LAMTOR2, LAMTOR3 heterodimer. The Ragulator complex interacts with both the mTORC1 complex and heterodimers constituted of the Rag GTPases RagA/RRAGA, RagB/RRAGB, RagC/RRAGC and RagD/RRAGD; regulated by amino acid availability. The Ragulator complex interacts with SLC38A9; the probable amino acid sensor (By similarity). Interacts with LAMTOR1 and LAMTOR2; the interaction is direct (PubMed:11266467, PubMed:15263099, PubMed:19177150). Component of the lysosomal folliculin complex (LFC), composed of FLCN, FNIP1 (or FNIP2), RagA/RRAGA or RagB/RRAGB GDP-bound, RagC/RRAGC or RagD/RRAGD GTP-bound, and Ragulator (By similarity). Interacts with MAP2K1/MEK1 and MAPK2 (PubMed:9733512). Interacts with MORG1 (PubMed:15118098).</text>
</comment>
<comment type="interaction">
    <interactant intactId="EBI-1039530">
        <id>O88653</id>
    </interactant>
    <interactant intactId="EBI-1038198">
        <id>Q9JHS3</id>
        <label>Lamtor2</label>
    </interactant>
    <organismsDiffer>false</organismsDiffer>
    <experiments>2</experiments>
</comment>
<comment type="interaction">
    <interactant intactId="EBI-1039530">
        <id>O88653</id>
    </interactant>
    <interactant intactId="EBI-919067">
        <id>Q6P791</id>
        <label>Lamtor1</label>
    </interactant>
    <organismsDiffer>true</organismsDiffer>
    <experiments>5</experiments>
</comment>
<comment type="subcellular location">
    <subcellularLocation>
        <location evidence="4 5">Late endosome membrane</location>
        <topology evidence="4 5">Peripheral membrane protein</topology>
        <orientation evidence="4 5">Cytoplasmic side</orientation>
    </subcellularLocation>
    <text evidence="5">Recruited to lysosome and endosome membranes by LAMTOR1.</text>
</comment>
<comment type="similarity">
    <text evidence="7">Belongs to the LAMTOR3 family.</text>
</comment>